<name>RNC_ECOL6</name>
<sequence>MNPIVINRLQRKLGYTFNHQELLQQALTHRSASSKHNERLEFLGDSILSYVIANALYHRFPRVDEGDMSRMRATLVRGNTLAELAREFELGECLRLGPGELKSGGFRRESILADTVEALIGGVFLDSDIQTVEKLILNWYQTRLDEISPGDKQKDPKTRLQEYLQGRHLPLPTYLVVQVRGEAHDQEFTIHCQVSGLSEPVVGTGSSRRKAEQAAAEQALKKLELE</sequence>
<organism>
    <name type="scientific">Escherichia coli O6:H1 (strain CFT073 / ATCC 700928 / UPEC)</name>
    <dbReference type="NCBI Taxonomy" id="199310"/>
    <lineage>
        <taxon>Bacteria</taxon>
        <taxon>Pseudomonadati</taxon>
        <taxon>Pseudomonadota</taxon>
        <taxon>Gammaproteobacteria</taxon>
        <taxon>Enterobacterales</taxon>
        <taxon>Enterobacteriaceae</taxon>
        <taxon>Escherichia</taxon>
    </lineage>
</organism>
<keyword id="KW-0963">Cytoplasm</keyword>
<keyword id="KW-0255">Endonuclease</keyword>
<keyword id="KW-0378">Hydrolase</keyword>
<keyword id="KW-0460">Magnesium</keyword>
<keyword id="KW-0479">Metal-binding</keyword>
<keyword id="KW-0507">mRNA processing</keyword>
<keyword id="KW-0540">Nuclease</keyword>
<keyword id="KW-1185">Reference proteome</keyword>
<keyword id="KW-0694">RNA-binding</keyword>
<keyword id="KW-0698">rRNA processing</keyword>
<keyword id="KW-0699">rRNA-binding</keyword>
<keyword id="KW-0819">tRNA processing</keyword>
<accession>P0A7Y1</accession>
<accession>P05797</accession>
<accession>P06141</accession>
<feature type="chain" id="PRO_0000180397" description="Ribonuclease 3">
    <location>
        <begin position="1"/>
        <end position="226"/>
    </location>
</feature>
<feature type="domain" description="RNase III" evidence="1">
    <location>
        <begin position="6"/>
        <end position="128"/>
    </location>
</feature>
<feature type="domain" description="DRBM" evidence="1">
    <location>
        <begin position="155"/>
        <end position="225"/>
    </location>
</feature>
<feature type="active site" evidence="1">
    <location>
        <position position="45"/>
    </location>
</feature>
<feature type="active site" evidence="1">
    <location>
        <position position="117"/>
    </location>
</feature>
<feature type="binding site" evidence="1">
    <location>
        <position position="41"/>
    </location>
    <ligand>
        <name>Mg(2+)</name>
        <dbReference type="ChEBI" id="CHEBI:18420"/>
    </ligand>
</feature>
<feature type="binding site" evidence="1">
    <location>
        <position position="114"/>
    </location>
    <ligand>
        <name>Mg(2+)</name>
        <dbReference type="ChEBI" id="CHEBI:18420"/>
    </ligand>
</feature>
<feature type="binding site" evidence="1">
    <location>
        <position position="117"/>
    </location>
    <ligand>
        <name>Mg(2+)</name>
        <dbReference type="ChEBI" id="CHEBI:18420"/>
    </ligand>
</feature>
<comment type="function">
    <text evidence="1">Digests double-stranded RNA. Involved in the processing of primary rRNA transcript to yield the immediate precursors to the large and small rRNAs (23S and 16S). Processes some mRNAs, and tRNAs when they are encoded in the rRNA operon. Processes pre-crRNA and tracrRNA of type II CRISPR loci if present in the organism.</text>
</comment>
<comment type="catalytic activity">
    <reaction evidence="1">
        <text>Endonucleolytic cleavage to 5'-phosphomonoester.</text>
        <dbReference type="EC" id="3.1.26.3"/>
    </reaction>
</comment>
<comment type="cofactor">
    <cofactor evidence="1">
        <name>Mg(2+)</name>
        <dbReference type="ChEBI" id="CHEBI:18420"/>
    </cofactor>
</comment>
<comment type="subunit">
    <text evidence="1">Homodimer.</text>
</comment>
<comment type="subcellular location">
    <subcellularLocation>
        <location evidence="1">Cytoplasm</location>
    </subcellularLocation>
</comment>
<comment type="similarity">
    <text evidence="1">Belongs to the ribonuclease III family.</text>
</comment>
<proteinExistence type="inferred from homology"/>
<evidence type="ECO:0000255" key="1">
    <source>
        <dbReference type="HAMAP-Rule" id="MF_00104"/>
    </source>
</evidence>
<gene>
    <name evidence="1" type="primary">rnc</name>
    <name type="ordered locus">c3091</name>
</gene>
<dbReference type="EC" id="3.1.26.3" evidence="1"/>
<dbReference type="EMBL" id="AE014075">
    <property type="protein sequence ID" value="AAN81540.1"/>
    <property type="molecule type" value="Genomic_DNA"/>
</dbReference>
<dbReference type="RefSeq" id="WP_001068343.1">
    <property type="nucleotide sequence ID" value="NZ_CP051263.1"/>
</dbReference>
<dbReference type="SMR" id="P0A7Y1"/>
<dbReference type="STRING" id="199310.c3091"/>
<dbReference type="GeneID" id="93774524"/>
<dbReference type="KEGG" id="ecc:c3091"/>
<dbReference type="eggNOG" id="COG0571">
    <property type="taxonomic scope" value="Bacteria"/>
</dbReference>
<dbReference type="HOGENOM" id="CLU_000907_1_1_6"/>
<dbReference type="BioCyc" id="ECOL199310:C3091-MONOMER"/>
<dbReference type="Proteomes" id="UP000001410">
    <property type="component" value="Chromosome"/>
</dbReference>
<dbReference type="GO" id="GO:0005737">
    <property type="term" value="C:cytoplasm"/>
    <property type="evidence" value="ECO:0007669"/>
    <property type="project" value="UniProtKB-SubCell"/>
</dbReference>
<dbReference type="GO" id="GO:0003725">
    <property type="term" value="F:double-stranded RNA binding"/>
    <property type="evidence" value="ECO:0007669"/>
    <property type="project" value="TreeGrafter"/>
</dbReference>
<dbReference type="GO" id="GO:0046872">
    <property type="term" value="F:metal ion binding"/>
    <property type="evidence" value="ECO:0007669"/>
    <property type="project" value="UniProtKB-KW"/>
</dbReference>
<dbReference type="GO" id="GO:0004525">
    <property type="term" value="F:ribonuclease III activity"/>
    <property type="evidence" value="ECO:0007669"/>
    <property type="project" value="UniProtKB-UniRule"/>
</dbReference>
<dbReference type="GO" id="GO:0019843">
    <property type="term" value="F:rRNA binding"/>
    <property type="evidence" value="ECO:0007669"/>
    <property type="project" value="UniProtKB-KW"/>
</dbReference>
<dbReference type="GO" id="GO:0006397">
    <property type="term" value="P:mRNA processing"/>
    <property type="evidence" value="ECO:0007669"/>
    <property type="project" value="UniProtKB-UniRule"/>
</dbReference>
<dbReference type="GO" id="GO:0010468">
    <property type="term" value="P:regulation of gene expression"/>
    <property type="evidence" value="ECO:0007669"/>
    <property type="project" value="TreeGrafter"/>
</dbReference>
<dbReference type="GO" id="GO:0006364">
    <property type="term" value="P:rRNA processing"/>
    <property type="evidence" value="ECO:0007669"/>
    <property type="project" value="UniProtKB-UniRule"/>
</dbReference>
<dbReference type="GO" id="GO:0008033">
    <property type="term" value="P:tRNA processing"/>
    <property type="evidence" value="ECO:0007669"/>
    <property type="project" value="UniProtKB-KW"/>
</dbReference>
<dbReference type="CDD" id="cd10845">
    <property type="entry name" value="DSRM_RNAse_III_family"/>
    <property type="match status" value="1"/>
</dbReference>
<dbReference type="CDD" id="cd00593">
    <property type="entry name" value="RIBOc"/>
    <property type="match status" value="1"/>
</dbReference>
<dbReference type="FunFam" id="1.10.1520.10:FF:000001">
    <property type="entry name" value="Ribonuclease 3"/>
    <property type="match status" value="1"/>
</dbReference>
<dbReference type="FunFam" id="3.30.160.20:FF:000003">
    <property type="entry name" value="Ribonuclease 3"/>
    <property type="match status" value="1"/>
</dbReference>
<dbReference type="Gene3D" id="3.30.160.20">
    <property type="match status" value="1"/>
</dbReference>
<dbReference type="Gene3D" id="1.10.1520.10">
    <property type="entry name" value="Ribonuclease III domain"/>
    <property type="match status" value="1"/>
</dbReference>
<dbReference type="HAMAP" id="MF_00104">
    <property type="entry name" value="RNase_III"/>
    <property type="match status" value="1"/>
</dbReference>
<dbReference type="InterPro" id="IPR014720">
    <property type="entry name" value="dsRBD_dom"/>
</dbReference>
<dbReference type="InterPro" id="IPR011907">
    <property type="entry name" value="RNase_III"/>
</dbReference>
<dbReference type="InterPro" id="IPR000999">
    <property type="entry name" value="RNase_III_dom"/>
</dbReference>
<dbReference type="InterPro" id="IPR036389">
    <property type="entry name" value="RNase_III_sf"/>
</dbReference>
<dbReference type="NCBIfam" id="TIGR02191">
    <property type="entry name" value="RNaseIII"/>
    <property type="match status" value="1"/>
</dbReference>
<dbReference type="PANTHER" id="PTHR11207:SF0">
    <property type="entry name" value="RIBONUCLEASE 3"/>
    <property type="match status" value="1"/>
</dbReference>
<dbReference type="PANTHER" id="PTHR11207">
    <property type="entry name" value="RIBONUCLEASE III"/>
    <property type="match status" value="1"/>
</dbReference>
<dbReference type="Pfam" id="PF00035">
    <property type="entry name" value="dsrm"/>
    <property type="match status" value="1"/>
</dbReference>
<dbReference type="Pfam" id="PF14622">
    <property type="entry name" value="Ribonucleas_3_3"/>
    <property type="match status" value="1"/>
</dbReference>
<dbReference type="SMART" id="SM00358">
    <property type="entry name" value="DSRM"/>
    <property type="match status" value="1"/>
</dbReference>
<dbReference type="SMART" id="SM00535">
    <property type="entry name" value="RIBOc"/>
    <property type="match status" value="1"/>
</dbReference>
<dbReference type="SUPFAM" id="SSF54768">
    <property type="entry name" value="dsRNA-binding domain-like"/>
    <property type="match status" value="1"/>
</dbReference>
<dbReference type="SUPFAM" id="SSF69065">
    <property type="entry name" value="RNase III domain-like"/>
    <property type="match status" value="1"/>
</dbReference>
<dbReference type="PROSITE" id="PS50137">
    <property type="entry name" value="DS_RBD"/>
    <property type="match status" value="1"/>
</dbReference>
<dbReference type="PROSITE" id="PS00517">
    <property type="entry name" value="RNASE_3_1"/>
    <property type="match status" value="1"/>
</dbReference>
<dbReference type="PROSITE" id="PS50142">
    <property type="entry name" value="RNASE_3_2"/>
    <property type="match status" value="1"/>
</dbReference>
<reference key="1">
    <citation type="journal article" date="2002" name="Proc. Natl. Acad. Sci. U.S.A.">
        <title>Extensive mosaic structure revealed by the complete genome sequence of uropathogenic Escherichia coli.</title>
        <authorList>
            <person name="Welch R.A."/>
            <person name="Burland V."/>
            <person name="Plunkett G. III"/>
            <person name="Redford P."/>
            <person name="Roesch P."/>
            <person name="Rasko D."/>
            <person name="Buckles E.L."/>
            <person name="Liou S.-R."/>
            <person name="Boutin A."/>
            <person name="Hackett J."/>
            <person name="Stroud D."/>
            <person name="Mayhew G.F."/>
            <person name="Rose D.J."/>
            <person name="Zhou S."/>
            <person name="Schwartz D.C."/>
            <person name="Perna N.T."/>
            <person name="Mobley H.L.T."/>
            <person name="Donnenberg M.S."/>
            <person name="Blattner F.R."/>
        </authorList>
    </citation>
    <scope>NUCLEOTIDE SEQUENCE [LARGE SCALE GENOMIC DNA]</scope>
    <source>
        <strain>CFT073 / ATCC 700928 / UPEC</strain>
    </source>
</reference>
<protein>
    <recommendedName>
        <fullName evidence="1">Ribonuclease 3</fullName>
        <ecNumber evidence="1">3.1.26.3</ecNumber>
    </recommendedName>
    <alternativeName>
        <fullName evidence="1">Ribonuclease III</fullName>
        <shortName evidence="1">RNase III</shortName>
    </alternativeName>
</protein>